<sequence length="334" mass="38474">MESPCRTITLEKNGTSLEPVHYSVQGKEILQIFKENFQKEDPVLFLDGTAGEGGHSFLFLKEFPNSRIILCDRDPIMLSRALTRLSDFSERVVSIQTNFSEINQKLLTSYGIDQTPQGILLDLGISTFHLFHSGRGFSFRESEPLDMRLNPNSGQSAEEILNIYPKDRLMNIFYTYGEERWSKKIAEVIVETRKQNSISTTFELANLVSKIIPRKFWPPGRHPATRIFQALRIEVNQELAHIENGLKLLLDLLRLGGVIQVISFHSLEDRIVKNSFRDYAKQNGFELLTKKPILPSQEEIDENPASRSAKLRILRKTKSVDKKYRNKNFEEEEE</sequence>
<organism>
    <name type="scientific">Leptospira interrogans serogroup Icterohaemorrhagiae serovar copenhageni (strain Fiocruz L1-130)</name>
    <dbReference type="NCBI Taxonomy" id="267671"/>
    <lineage>
        <taxon>Bacteria</taxon>
        <taxon>Pseudomonadati</taxon>
        <taxon>Spirochaetota</taxon>
        <taxon>Spirochaetia</taxon>
        <taxon>Leptospirales</taxon>
        <taxon>Leptospiraceae</taxon>
        <taxon>Leptospira</taxon>
    </lineage>
</organism>
<accession>P62472</accession>
<name>RSMH_LEPIC</name>
<keyword id="KW-0963">Cytoplasm</keyword>
<keyword id="KW-0489">Methyltransferase</keyword>
<keyword id="KW-0698">rRNA processing</keyword>
<keyword id="KW-0949">S-adenosyl-L-methionine</keyword>
<keyword id="KW-0808">Transferase</keyword>
<protein>
    <recommendedName>
        <fullName evidence="1">Ribosomal RNA small subunit methyltransferase H</fullName>
        <ecNumber evidence="1">2.1.1.199</ecNumber>
    </recommendedName>
    <alternativeName>
        <fullName evidence="1">16S rRNA m(4)C1402 methyltransferase</fullName>
    </alternativeName>
    <alternativeName>
        <fullName evidence="1">rRNA (cytosine-N(4)-)-methyltransferase RsmH</fullName>
    </alternativeName>
</protein>
<comment type="function">
    <text evidence="1">Specifically methylates the N4 position of cytidine in position 1402 (C1402) of 16S rRNA.</text>
</comment>
<comment type="catalytic activity">
    <reaction evidence="1">
        <text>cytidine(1402) in 16S rRNA + S-adenosyl-L-methionine = N(4)-methylcytidine(1402) in 16S rRNA + S-adenosyl-L-homocysteine + H(+)</text>
        <dbReference type="Rhea" id="RHEA:42928"/>
        <dbReference type="Rhea" id="RHEA-COMP:10286"/>
        <dbReference type="Rhea" id="RHEA-COMP:10287"/>
        <dbReference type="ChEBI" id="CHEBI:15378"/>
        <dbReference type="ChEBI" id="CHEBI:57856"/>
        <dbReference type="ChEBI" id="CHEBI:59789"/>
        <dbReference type="ChEBI" id="CHEBI:74506"/>
        <dbReference type="ChEBI" id="CHEBI:82748"/>
        <dbReference type="EC" id="2.1.1.199"/>
    </reaction>
</comment>
<comment type="subcellular location">
    <subcellularLocation>
        <location evidence="1">Cytoplasm</location>
    </subcellularLocation>
</comment>
<comment type="similarity">
    <text evidence="1">Belongs to the methyltransferase superfamily. RsmH family.</text>
</comment>
<gene>
    <name evidence="1" type="primary">rsmH</name>
    <name type="synonym">mraW</name>
    <name type="ordered locus">LIC_11869</name>
</gene>
<reference key="1">
    <citation type="journal article" date="2004" name="J. Bacteriol.">
        <title>Comparative genomics of two Leptospira interrogans serovars reveals novel insights into physiology and pathogenesis.</title>
        <authorList>
            <person name="Nascimento A.L.T.O."/>
            <person name="Ko A.I."/>
            <person name="Martins E.A.L."/>
            <person name="Monteiro-Vitorello C.B."/>
            <person name="Ho P.L."/>
            <person name="Haake D.A."/>
            <person name="Verjovski-Almeida S."/>
            <person name="Hartskeerl R.A."/>
            <person name="Marques M.V."/>
            <person name="Oliveira M.C."/>
            <person name="Menck C.F.M."/>
            <person name="Leite L.C.C."/>
            <person name="Carrer H."/>
            <person name="Coutinho L.L."/>
            <person name="Degrave W.M."/>
            <person name="Dellagostin O.A."/>
            <person name="El-Dorry H."/>
            <person name="Ferro E.S."/>
            <person name="Ferro M.I.T."/>
            <person name="Furlan L.R."/>
            <person name="Gamberini M."/>
            <person name="Giglioti E.A."/>
            <person name="Goes-Neto A."/>
            <person name="Goldman G.H."/>
            <person name="Goldman M.H.S."/>
            <person name="Harakava R."/>
            <person name="Jeronimo S.M.B."/>
            <person name="Junqueira-de-Azevedo I.L.M."/>
            <person name="Kimura E.T."/>
            <person name="Kuramae E.E."/>
            <person name="Lemos E.G.M."/>
            <person name="Lemos M.V.F."/>
            <person name="Marino C.L."/>
            <person name="Nunes L.R."/>
            <person name="de Oliveira R.C."/>
            <person name="Pereira G.G."/>
            <person name="Reis M.S."/>
            <person name="Schriefer A."/>
            <person name="Siqueira W.J."/>
            <person name="Sommer P."/>
            <person name="Tsai S.M."/>
            <person name="Simpson A.J.G."/>
            <person name="Ferro J.A."/>
            <person name="Camargo L.E.A."/>
            <person name="Kitajima J.P."/>
            <person name="Setubal J.C."/>
            <person name="Van Sluys M.A."/>
        </authorList>
    </citation>
    <scope>NUCLEOTIDE SEQUENCE [LARGE SCALE GENOMIC DNA]</scope>
    <source>
        <strain>Fiocruz L1-130</strain>
    </source>
</reference>
<dbReference type="EC" id="2.1.1.199" evidence="1"/>
<dbReference type="EMBL" id="AE016823">
    <property type="protein sequence ID" value="AAS70455.1"/>
    <property type="molecule type" value="Genomic_DNA"/>
</dbReference>
<dbReference type="RefSeq" id="WP_000445616.1">
    <property type="nucleotide sequence ID" value="NC_005823.1"/>
</dbReference>
<dbReference type="SMR" id="P62472"/>
<dbReference type="GeneID" id="61141765"/>
<dbReference type="KEGG" id="lic:LIC_11869"/>
<dbReference type="HOGENOM" id="CLU_038422_3_0_12"/>
<dbReference type="Proteomes" id="UP000007037">
    <property type="component" value="Chromosome I"/>
</dbReference>
<dbReference type="GO" id="GO:0005737">
    <property type="term" value="C:cytoplasm"/>
    <property type="evidence" value="ECO:0007669"/>
    <property type="project" value="UniProtKB-SubCell"/>
</dbReference>
<dbReference type="GO" id="GO:0071424">
    <property type="term" value="F:rRNA (cytosine-N4-)-methyltransferase activity"/>
    <property type="evidence" value="ECO:0007669"/>
    <property type="project" value="UniProtKB-UniRule"/>
</dbReference>
<dbReference type="GO" id="GO:0070475">
    <property type="term" value="P:rRNA base methylation"/>
    <property type="evidence" value="ECO:0007669"/>
    <property type="project" value="UniProtKB-UniRule"/>
</dbReference>
<dbReference type="FunFam" id="1.10.150.170:FF:000006">
    <property type="entry name" value="Ribosomal RNA small subunit methyltransferase H"/>
    <property type="match status" value="1"/>
</dbReference>
<dbReference type="Gene3D" id="1.10.150.170">
    <property type="entry name" value="Putative methyltransferase TM0872, insert domain"/>
    <property type="match status" value="1"/>
</dbReference>
<dbReference type="Gene3D" id="3.40.50.150">
    <property type="entry name" value="Vaccinia Virus protein VP39"/>
    <property type="match status" value="1"/>
</dbReference>
<dbReference type="HAMAP" id="MF_01007">
    <property type="entry name" value="16SrRNA_methyltr_H"/>
    <property type="match status" value="1"/>
</dbReference>
<dbReference type="InterPro" id="IPR002903">
    <property type="entry name" value="RsmH"/>
</dbReference>
<dbReference type="InterPro" id="IPR023397">
    <property type="entry name" value="SAM-dep_MeTrfase_MraW_recog"/>
</dbReference>
<dbReference type="InterPro" id="IPR029063">
    <property type="entry name" value="SAM-dependent_MTases_sf"/>
</dbReference>
<dbReference type="NCBIfam" id="TIGR00006">
    <property type="entry name" value="16S rRNA (cytosine(1402)-N(4))-methyltransferase RsmH"/>
    <property type="match status" value="1"/>
</dbReference>
<dbReference type="PANTHER" id="PTHR11265:SF0">
    <property type="entry name" value="12S RRNA N4-METHYLCYTIDINE METHYLTRANSFERASE"/>
    <property type="match status" value="1"/>
</dbReference>
<dbReference type="PANTHER" id="PTHR11265">
    <property type="entry name" value="S-ADENOSYL-METHYLTRANSFERASE MRAW"/>
    <property type="match status" value="1"/>
</dbReference>
<dbReference type="Pfam" id="PF01795">
    <property type="entry name" value="Methyltransf_5"/>
    <property type="match status" value="1"/>
</dbReference>
<dbReference type="PIRSF" id="PIRSF004486">
    <property type="entry name" value="MraW"/>
    <property type="match status" value="1"/>
</dbReference>
<dbReference type="SUPFAM" id="SSF81799">
    <property type="entry name" value="Putative methyltransferase TM0872, insert domain"/>
    <property type="match status" value="1"/>
</dbReference>
<dbReference type="SUPFAM" id="SSF53335">
    <property type="entry name" value="S-adenosyl-L-methionine-dependent methyltransferases"/>
    <property type="match status" value="1"/>
</dbReference>
<feature type="chain" id="PRO_0000108649" description="Ribosomal RNA small subunit methyltransferase H">
    <location>
        <begin position="1"/>
        <end position="334"/>
    </location>
</feature>
<feature type="binding site" evidence="1">
    <location>
        <begin position="53"/>
        <end position="55"/>
    </location>
    <ligand>
        <name>S-adenosyl-L-methionine</name>
        <dbReference type="ChEBI" id="CHEBI:59789"/>
    </ligand>
</feature>
<feature type="binding site" evidence="1">
    <location>
        <position position="72"/>
    </location>
    <ligand>
        <name>S-adenosyl-L-methionine</name>
        <dbReference type="ChEBI" id="CHEBI:59789"/>
    </ligand>
</feature>
<feature type="binding site" evidence="1">
    <location>
        <position position="99"/>
    </location>
    <ligand>
        <name>S-adenosyl-L-methionine</name>
        <dbReference type="ChEBI" id="CHEBI:59789"/>
    </ligand>
</feature>
<feature type="binding site" evidence="1">
    <location>
        <position position="122"/>
    </location>
    <ligand>
        <name>S-adenosyl-L-methionine</name>
        <dbReference type="ChEBI" id="CHEBI:59789"/>
    </ligand>
</feature>
<feature type="binding site" evidence="1">
    <location>
        <position position="129"/>
    </location>
    <ligand>
        <name>S-adenosyl-L-methionine</name>
        <dbReference type="ChEBI" id="CHEBI:59789"/>
    </ligand>
</feature>
<evidence type="ECO:0000255" key="1">
    <source>
        <dbReference type="HAMAP-Rule" id="MF_01007"/>
    </source>
</evidence>
<proteinExistence type="inferred from homology"/>